<organism>
    <name type="scientific">Escherichia coli O45:K1 (strain S88 / ExPEC)</name>
    <dbReference type="NCBI Taxonomy" id="585035"/>
    <lineage>
        <taxon>Bacteria</taxon>
        <taxon>Pseudomonadati</taxon>
        <taxon>Pseudomonadota</taxon>
        <taxon>Gammaproteobacteria</taxon>
        <taxon>Enterobacterales</taxon>
        <taxon>Enterobacteriaceae</taxon>
        <taxon>Escherichia</taxon>
    </lineage>
</organism>
<comment type="function">
    <text evidence="1">Catalyzes the transfer of a ribosyl phosphate group from 5-phosphoribose 1-diphosphate to orotate, leading to the formation of orotidine monophosphate (OMP).</text>
</comment>
<comment type="catalytic activity">
    <reaction evidence="1">
        <text>orotidine 5'-phosphate + diphosphate = orotate + 5-phospho-alpha-D-ribose 1-diphosphate</text>
        <dbReference type="Rhea" id="RHEA:10380"/>
        <dbReference type="ChEBI" id="CHEBI:30839"/>
        <dbReference type="ChEBI" id="CHEBI:33019"/>
        <dbReference type="ChEBI" id="CHEBI:57538"/>
        <dbReference type="ChEBI" id="CHEBI:58017"/>
        <dbReference type="EC" id="2.4.2.10"/>
    </reaction>
</comment>
<comment type="cofactor">
    <cofactor evidence="1">
        <name>Mg(2+)</name>
        <dbReference type="ChEBI" id="CHEBI:18420"/>
    </cofactor>
</comment>
<comment type="pathway">
    <text evidence="1">Pyrimidine metabolism; UMP biosynthesis via de novo pathway; UMP from orotate: step 1/2.</text>
</comment>
<comment type="subunit">
    <text evidence="1">Homodimer.</text>
</comment>
<comment type="similarity">
    <text evidence="1">Belongs to the purine/pyrimidine phosphoribosyltransferase family. PyrE subfamily.</text>
</comment>
<name>PYRE_ECO45</name>
<accession>B7MFK3</accession>
<evidence type="ECO:0000255" key="1">
    <source>
        <dbReference type="HAMAP-Rule" id="MF_01208"/>
    </source>
</evidence>
<proteinExistence type="inferred from homology"/>
<reference key="1">
    <citation type="journal article" date="2009" name="PLoS Genet.">
        <title>Organised genome dynamics in the Escherichia coli species results in highly diverse adaptive paths.</title>
        <authorList>
            <person name="Touchon M."/>
            <person name="Hoede C."/>
            <person name="Tenaillon O."/>
            <person name="Barbe V."/>
            <person name="Baeriswyl S."/>
            <person name="Bidet P."/>
            <person name="Bingen E."/>
            <person name="Bonacorsi S."/>
            <person name="Bouchier C."/>
            <person name="Bouvet O."/>
            <person name="Calteau A."/>
            <person name="Chiapello H."/>
            <person name="Clermont O."/>
            <person name="Cruveiller S."/>
            <person name="Danchin A."/>
            <person name="Diard M."/>
            <person name="Dossat C."/>
            <person name="Karoui M.E."/>
            <person name="Frapy E."/>
            <person name="Garry L."/>
            <person name="Ghigo J.M."/>
            <person name="Gilles A.M."/>
            <person name="Johnson J."/>
            <person name="Le Bouguenec C."/>
            <person name="Lescat M."/>
            <person name="Mangenot S."/>
            <person name="Martinez-Jehanne V."/>
            <person name="Matic I."/>
            <person name="Nassif X."/>
            <person name="Oztas S."/>
            <person name="Petit M.A."/>
            <person name="Pichon C."/>
            <person name="Rouy Z."/>
            <person name="Ruf C.S."/>
            <person name="Schneider D."/>
            <person name="Tourret J."/>
            <person name="Vacherie B."/>
            <person name="Vallenet D."/>
            <person name="Medigue C."/>
            <person name="Rocha E.P.C."/>
            <person name="Denamur E."/>
        </authorList>
    </citation>
    <scope>NUCLEOTIDE SEQUENCE [LARGE SCALE GENOMIC DNA]</scope>
    <source>
        <strain>S88 / ExPEC</strain>
    </source>
</reference>
<gene>
    <name evidence="1" type="primary">pyrE</name>
    <name type="ordered locus">ECS88_4056</name>
</gene>
<protein>
    <recommendedName>
        <fullName evidence="1">Orotate phosphoribosyltransferase</fullName>
        <shortName evidence="1">OPRT</shortName>
        <shortName evidence="1">OPRTase</shortName>
        <ecNumber evidence="1">2.4.2.10</ecNumber>
    </recommendedName>
</protein>
<dbReference type="EC" id="2.4.2.10" evidence="1"/>
<dbReference type="EMBL" id="CU928161">
    <property type="protein sequence ID" value="CAR05265.1"/>
    <property type="molecule type" value="Genomic_DNA"/>
</dbReference>
<dbReference type="RefSeq" id="WP_000806174.1">
    <property type="nucleotide sequence ID" value="NC_011742.1"/>
</dbReference>
<dbReference type="SMR" id="B7MFK3"/>
<dbReference type="KEGG" id="ecz:ECS88_4056"/>
<dbReference type="HOGENOM" id="CLU_074878_0_1_6"/>
<dbReference type="UniPathway" id="UPA00070">
    <property type="reaction ID" value="UER00119"/>
</dbReference>
<dbReference type="Proteomes" id="UP000000747">
    <property type="component" value="Chromosome"/>
</dbReference>
<dbReference type="GO" id="GO:0005737">
    <property type="term" value="C:cytoplasm"/>
    <property type="evidence" value="ECO:0007669"/>
    <property type="project" value="TreeGrafter"/>
</dbReference>
<dbReference type="GO" id="GO:0000287">
    <property type="term" value="F:magnesium ion binding"/>
    <property type="evidence" value="ECO:0007669"/>
    <property type="project" value="UniProtKB-UniRule"/>
</dbReference>
<dbReference type="GO" id="GO:0004588">
    <property type="term" value="F:orotate phosphoribosyltransferase activity"/>
    <property type="evidence" value="ECO:0007669"/>
    <property type="project" value="UniProtKB-UniRule"/>
</dbReference>
<dbReference type="GO" id="GO:0006207">
    <property type="term" value="P:'de novo' pyrimidine nucleobase biosynthetic process"/>
    <property type="evidence" value="ECO:0007669"/>
    <property type="project" value="TreeGrafter"/>
</dbReference>
<dbReference type="GO" id="GO:0044205">
    <property type="term" value="P:'de novo' UMP biosynthetic process"/>
    <property type="evidence" value="ECO:0007669"/>
    <property type="project" value="UniProtKB-UniRule"/>
</dbReference>
<dbReference type="GO" id="GO:0046132">
    <property type="term" value="P:pyrimidine ribonucleoside biosynthetic process"/>
    <property type="evidence" value="ECO:0007669"/>
    <property type="project" value="TreeGrafter"/>
</dbReference>
<dbReference type="CDD" id="cd06223">
    <property type="entry name" value="PRTases_typeI"/>
    <property type="match status" value="1"/>
</dbReference>
<dbReference type="FunFam" id="3.40.50.2020:FF:000008">
    <property type="entry name" value="Orotate phosphoribosyltransferase"/>
    <property type="match status" value="1"/>
</dbReference>
<dbReference type="Gene3D" id="3.40.50.2020">
    <property type="match status" value="1"/>
</dbReference>
<dbReference type="HAMAP" id="MF_01208">
    <property type="entry name" value="PyrE"/>
    <property type="match status" value="1"/>
</dbReference>
<dbReference type="InterPro" id="IPR023031">
    <property type="entry name" value="OPRT"/>
</dbReference>
<dbReference type="InterPro" id="IPR004467">
    <property type="entry name" value="Or_phspho_trans_dom"/>
</dbReference>
<dbReference type="InterPro" id="IPR000836">
    <property type="entry name" value="PRibTrfase_dom"/>
</dbReference>
<dbReference type="InterPro" id="IPR029057">
    <property type="entry name" value="PRTase-like"/>
</dbReference>
<dbReference type="NCBIfam" id="TIGR00336">
    <property type="entry name" value="pyrE"/>
    <property type="match status" value="1"/>
</dbReference>
<dbReference type="PANTHER" id="PTHR46683">
    <property type="entry name" value="OROTATE PHOSPHORIBOSYLTRANSFERASE 1-RELATED"/>
    <property type="match status" value="1"/>
</dbReference>
<dbReference type="PANTHER" id="PTHR46683:SF1">
    <property type="entry name" value="OROTATE PHOSPHORIBOSYLTRANSFERASE 1-RELATED"/>
    <property type="match status" value="1"/>
</dbReference>
<dbReference type="Pfam" id="PF00156">
    <property type="entry name" value="Pribosyltran"/>
    <property type="match status" value="1"/>
</dbReference>
<dbReference type="SUPFAM" id="SSF53271">
    <property type="entry name" value="PRTase-like"/>
    <property type="match status" value="1"/>
</dbReference>
<dbReference type="PROSITE" id="PS00103">
    <property type="entry name" value="PUR_PYR_PR_TRANSFER"/>
    <property type="match status" value="1"/>
</dbReference>
<sequence>MKPYQRQFIEFALSKQVLKFGEFTLKSGRKSPYFFNAGLFNTGRDLALLGRFYAEALVDSGIEFDLLFGPAYKGIPIATTTAVALAEHHDLDLPYCFNRKEAKDHGEGGNLVGSALQGRIMLVDDVITAGTAIRESMEIIQANGATLAGVLISLDRQERGRGEISAIQEVERDYNCKVISIITLKDLIAYLEEKPEMAEHLAAVKAYREEFGV</sequence>
<keyword id="KW-0328">Glycosyltransferase</keyword>
<keyword id="KW-0460">Magnesium</keyword>
<keyword id="KW-0665">Pyrimidine biosynthesis</keyword>
<keyword id="KW-1185">Reference proteome</keyword>
<keyword id="KW-0808">Transferase</keyword>
<feature type="chain" id="PRO_1000138785" description="Orotate phosphoribosyltransferase">
    <location>
        <begin position="1"/>
        <end position="213"/>
    </location>
</feature>
<feature type="binding site" description="in other chain" evidence="1">
    <location>
        <position position="26"/>
    </location>
    <ligand>
        <name>5-phospho-alpha-D-ribose 1-diphosphate</name>
        <dbReference type="ChEBI" id="CHEBI:58017"/>
        <note>ligand shared between dimeric partners</note>
    </ligand>
</feature>
<feature type="binding site" evidence="1">
    <location>
        <begin position="34"/>
        <end position="35"/>
    </location>
    <ligand>
        <name>orotate</name>
        <dbReference type="ChEBI" id="CHEBI:30839"/>
    </ligand>
</feature>
<feature type="binding site" description="in other chain" evidence="1">
    <location>
        <begin position="72"/>
        <end position="73"/>
    </location>
    <ligand>
        <name>5-phospho-alpha-D-ribose 1-diphosphate</name>
        <dbReference type="ChEBI" id="CHEBI:58017"/>
        <note>ligand shared between dimeric partners</note>
    </ligand>
</feature>
<feature type="binding site" evidence="1">
    <location>
        <position position="99"/>
    </location>
    <ligand>
        <name>5-phospho-alpha-D-ribose 1-diphosphate</name>
        <dbReference type="ChEBI" id="CHEBI:58017"/>
        <note>ligand shared between dimeric partners</note>
    </ligand>
</feature>
<feature type="binding site" description="in other chain" evidence="1">
    <location>
        <position position="100"/>
    </location>
    <ligand>
        <name>5-phospho-alpha-D-ribose 1-diphosphate</name>
        <dbReference type="ChEBI" id="CHEBI:58017"/>
        <note>ligand shared between dimeric partners</note>
    </ligand>
</feature>
<feature type="binding site" evidence="1">
    <location>
        <position position="103"/>
    </location>
    <ligand>
        <name>5-phospho-alpha-D-ribose 1-diphosphate</name>
        <dbReference type="ChEBI" id="CHEBI:58017"/>
        <note>ligand shared between dimeric partners</note>
    </ligand>
</feature>
<feature type="binding site" evidence="1">
    <location>
        <position position="105"/>
    </location>
    <ligand>
        <name>5-phospho-alpha-D-ribose 1-diphosphate</name>
        <dbReference type="ChEBI" id="CHEBI:58017"/>
        <note>ligand shared between dimeric partners</note>
    </ligand>
</feature>
<feature type="binding site" description="in other chain" evidence="1">
    <location>
        <begin position="124"/>
        <end position="132"/>
    </location>
    <ligand>
        <name>5-phospho-alpha-D-ribose 1-diphosphate</name>
        <dbReference type="ChEBI" id="CHEBI:58017"/>
        <note>ligand shared between dimeric partners</note>
    </ligand>
</feature>
<feature type="binding site" evidence="1">
    <location>
        <position position="128"/>
    </location>
    <ligand>
        <name>orotate</name>
        <dbReference type="ChEBI" id="CHEBI:30839"/>
    </ligand>
</feature>
<feature type="binding site" evidence="1">
    <location>
        <position position="156"/>
    </location>
    <ligand>
        <name>orotate</name>
        <dbReference type="ChEBI" id="CHEBI:30839"/>
    </ligand>
</feature>